<evidence type="ECO:0000250" key="1"/>
<evidence type="ECO:0000305" key="2"/>
<sequence length="297" mass="32239">MKPQVYHVDAFTSQPFRGNSAGVVFPADNLSEAQMQLIARELGHSETAFLLHSDDSDVRIRYFTPTVEVPICGHATVAAHYVRAKVLGLGNCTVWQTSLAGKHRVTIEKHHDGYRISLEQGTPGFEPPLEGETRAAIINALHLTEDDILPGLPIQVATTGHSKVMIPLKPEVDIDALSPDLNALTAISKQIGCNGFFPFQIRPGKNETDGRMFSPAIGIVEDPVTGNANGPMGAWLVHHNVLPHDGNVLRVKGHQGRALGRDGMIEVTVTIRDNQPEKVTISGAAVILFHAEWAIKL</sequence>
<organism>
    <name type="scientific">Escherichia coli O157:H7</name>
    <dbReference type="NCBI Taxonomy" id="83334"/>
    <lineage>
        <taxon>Bacteria</taxon>
        <taxon>Pseudomonadati</taxon>
        <taxon>Pseudomonadota</taxon>
        <taxon>Gammaproteobacteria</taxon>
        <taxon>Enterobacterales</taxon>
        <taxon>Enterobacteriaceae</taxon>
        <taxon>Escherichia</taxon>
    </lineage>
</organism>
<gene>
    <name type="primary">yddE</name>
    <name type="ordered locus">Z2248</name>
    <name type="ordered locus">ECs2067</name>
</gene>
<keyword id="KW-0413">Isomerase</keyword>
<keyword id="KW-1185">Reference proteome</keyword>
<comment type="subunit">
    <text evidence="1">Homodimer and homotetramer.</text>
</comment>
<comment type="similarity">
    <text evidence="2">Belongs to the PhzF family.</text>
</comment>
<reference key="1">
    <citation type="journal article" date="2001" name="Nature">
        <title>Genome sequence of enterohaemorrhagic Escherichia coli O157:H7.</title>
        <authorList>
            <person name="Perna N.T."/>
            <person name="Plunkett G. III"/>
            <person name="Burland V."/>
            <person name="Mau B."/>
            <person name="Glasner J.D."/>
            <person name="Rose D.J."/>
            <person name="Mayhew G.F."/>
            <person name="Evans P.S."/>
            <person name="Gregor J."/>
            <person name="Kirkpatrick H.A."/>
            <person name="Posfai G."/>
            <person name="Hackett J."/>
            <person name="Klink S."/>
            <person name="Boutin A."/>
            <person name="Shao Y."/>
            <person name="Miller L."/>
            <person name="Grotbeck E.J."/>
            <person name="Davis N.W."/>
            <person name="Lim A."/>
            <person name="Dimalanta E.T."/>
            <person name="Potamousis K."/>
            <person name="Apodaca J."/>
            <person name="Anantharaman T.S."/>
            <person name="Lin J."/>
            <person name="Yen G."/>
            <person name="Schwartz D.C."/>
            <person name="Welch R.A."/>
            <person name="Blattner F.R."/>
        </authorList>
    </citation>
    <scope>NUCLEOTIDE SEQUENCE [LARGE SCALE GENOMIC DNA]</scope>
    <source>
        <strain>O157:H7 / EDL933 / ATCC 700927 / EHEC</strain>
    </source>
</reference>
<reference key="2">
    <citation type="journal article" date="2001" name="DNA Res.">
        <title>Complete genome sequence of enterohemorrhagic Escherichia coli O157:H7 and genomic comparison with a laboratory strain K-12.</title>
        <authorList>
            <person name="Hayashi T."/>
            <person name="Makino K."/>
            <person name="Ohnishi M."/>
            <person name="Kurokawa K."/>
            <person name="Ishii K."/>
            <person name="Yokoyama K."/>
            <person name="Han C.-G."/>
            <person name="Ohtsubo E."/>
            <person name="Nakayama K."/>
            <person name="Murata T."/>
            <person name="Tanaka M."/>
            <person name="Tobe T."/>
            <person name="Iida T."/>
            <person name="Takami H."/>
            <person name="Honda T."/>
            <person name="Sasakawa C."/>
            <person name="Ogasawara N."/>
            <person name="Yasunaga T."/>
            <person name="Kuhara S."/>
            <person name="Shiba T."/>
            <person name="Hattori M."/>
            <person name="Shinagawa H."/>
        </authorList>
    </citation>
    <scope>NUCLEOTIDE SEQUENCE [LARGE SCALE GENOMIC DNA]</scope>
    <source>
        <strain>O157:H7 / Sakai / RIMD 0509952 / EHEC</strain>
    </source>
</reference>
<name>YDDE_ECO57</name>
<accession>P58292</accession>
<feature type="chain" id="PRO_0000162389" description="Uncharacterized isomerase YddE">
    <location>
        <begin position="1"/>
        <end position="297"/>
    </location>
</feature>
<feature type="active site" evidence="1">
    <location>
        <position position="46"/>
    </location>
</feature>
<dbReference type="EC" id="5.1.-.-"/>
<dbReference type="EMBL" id="AE005174">
    <property type="protein sequence ID" value="AAG56306.1"/>
    <property type="molecule type" value="Genomic_DNA"/>
</dbReference>
<dbReference type="EMBL" id="BA000007">
    <property type="protein sequence ID" value="BAB35490.1"/>
    <property type="molecule type" value="Genomic_DNA"/>
</dbReference>
<dbReference type="PIR" id="C90887">
    <property type="entry name" value="C90887"/>
</dbReference>
<dbReference type="PIR" id="F85730">
    <property type="entry name" value="F85730"/>
</dbReference>
<dbReference type="RefSeq" id="NP_310094.1">
    <property type="nucleotide sequence ID" value="NC_002695.1"/>
</dbReference>
<dbReference type="RefSeq" id="WP_000804405.1">
    <property type="nucleotide sequence ID" value="NZ_VOAI01000034.1"/>
</dbReference>
<dbReference type="SMR" id="P58292"/>
<dbReference type="STRING" id="155864.Z2248"/>
<dbReference type="GeneID" id="917267"/>
<dbReference type="KEGG" id="ece:Z2248"/>
<dbReference type="KEGG" id="ecs:ECs_2067"/>
<dbReference type="PATRIC" id="fig|386585.9.peg.2172"/>
<dbReference type="eggNOG" id="COG0384">
    <property type="taxonomic scope" value="Bacteria"/>
</dbReference>
<dbReference type="HOGENOM" id="CLU_048756_0_2_6"/>
<dbReference type="OMA" id="KVGYNET"/>
<dbReference type="Proteomes" id="UP000000558">
    <property type="component" value="Chromosome"/>
</dbReference>
<dbReference type="Proteomes" id="UP000002519">
    <property type="component" value="Chromosome"/>
</dbReference>
<dbReference type="GO" id="GO:0005737">
    <property type="term" value="C:cytoplasm"/>
    <property type="evidence" value="ECO:0007669"/>
    <property type="project" value="TreeGrafter"/>
</dbReference>
<dbReference type="GO" id="GO:0016853">
    <property type="term" value="F:isomerase activity"/>
    <property type="evidence" value="ECO:0007669"/>
    <property type="project" value="UniProtKB-KW"/>
</dbReference>
<dbReference type="GO" id="GO:0009058">
    <property type="term" value="P:biosynthetic process"/>
    <property type="evidence" value="ECO:0007669"/>
    <property type="project" value="InterPro"/>
</dbReference>
<dbReference type="Gene3D" id="3.10.310.10">
    <property type="entry name" value="Diaminopimelate Epimerase, Chain A, domain 1"/>
    <property type="match status" value="2"/>
</dbReference>
<dbReference type="InterPro" id="IPR003719">
    <property type="entry name" value="Phenazine_PhzF-like"/>
</dbReference>
<dbReference type="NCBIfam" id="TIGR00654">
    <property type="entry name" value="PhzF_family"/>
    <property type="match status" value="1"/>
</dbReference>
<dbReference type="NCBIfam" id="NF007625">
    <property type="entry name" value="PRK10281.1"/>
    <property type="match status" value="1"/>
</dbReference>
<dbReference type="PANTHER" id="PTHR13774:SF39">
    <property type="entry name" value="BIOSYNTHESIS PROTEIN, PUTATIVE-RELATED"/>
    <property type="match status" value="1"/>
</dbReference>
<dbReference type="PANTHER" id="PTHR13774">
    <property type="entry name" value="PHENAZINE BIOSYNTHESIS PROTEIN"/>
    <property type="match status" value="1"/>
</dbReference>
<dbReference type="Pfam" id="PF02567">
    <property type="entry name" value="PhzC-PhzF"/>
    <property type="match status" value="1"/>
</dbReference>
<dbReference type="PIRSF" id="PIRSF016184">
    <property type="entry name" value="PhzC_PhzF"/>
    <property type="match status" value="1"/>
</dbReference>
<dbReference type="SUPFAM" id="SSF54506">
    <property type="entry name" value="Diaminopimelate epimerase-like"/>
    <property type="match status" value="1"/>
</dbReference>
<proteinExistence type="inferred from homology"/>
<protein>
    <recommendedName>
        <fullName>Uncharacterized isomerase YddE</fullName>
        <ecNumber>5.1.-.-</ecNumber>
    </recommendedName>
</protein>